<feature type="chain" id="PRO_1000205828" description="Large ribosomal subunit protein bL34">
    <location>
        <begin position="1"/>
        <end position="44"/>
    </location>
</feature>
<keyword id="KW-0687">Ribonucleoprotein</keyword>
<keyword id="KW-0689">Ribosomal protein</keyword>
<dbReference type="EMBL" id="CP001615">
    <property type="protein sequence ID" value="ACQ70657.1"/>
    <property type="molecule type" value="Genomic_DNA"/>
</dbReference>
<dbReference type="RefSeq" id="WP_015880216.1">
    <property type="nucleotide sequence ID" value="NC_012673.1"/>
</dbReference>
<dbReference type="SMR" id="C4KZZ4"/>
<dbReference type="STRING" id="360911.EAT1b_1731"/>
<dbReference type="GeneID" id="94373612"/>
<dbReference type="KEGG" id="eat:EAT1b_1731"/>
<dbReference type="eggNOG" id="COG0230">
    <property type="taxonomic scope" value="Bacteria"/>
</dbReference>
<dbReference type="HOGENOM" id="CLU_129938_2_0_9"/>
<dbReference type="OrthoDB" id="9804164at2"/>
<dbReference type="Proteomes" id="UP000000716">
    <property type="component" value="Chromosome"/>
</dbReference>
<dbReference type="GO" id="GO:1990904">
    <property type="term" value="C:ribonucleoprotein complex"/>
    <property type="evidence" value="ECO:0007669"/>
    <property type="project" value="UniProtKB-KW"/>
</dbReference>
<dbReference type="GO" id="GO:0005840">
    <property type="term" value="C:ribosome"/>
    <property type="evidence" value="ECO:0007669"/>
    <property type="project" value="UniProtKB-KW"/>
</dbReference>
<dbReference type="GO" id="GO:0003735">
    <property type="term" value="F:structural constituent of ribosome"/>
    <property type="evidence" value="ECO:0007669"/>
    <property type="project" value="InterPro"/>
</dbReference>
<dbReference type="GO" id="GO:0006412">
    <property type="term" value="P:translation"/>
    <property type="evidence" value="ECO:0007669"/>
    <property type="project" value="UniProtKB-UniRule"/>
</dbReference>
<dbReference type="FunFam" id="1.10.287.3980:FF:000001">
    <property type="entry name" value="Mitochondrial ribosomal protein L34"/>
    <property type="match status" value="1"/>
</dbReference>
<dbReference type="Gene3D" id="1.10.287.3980">
    <property type="match status" value="1"/>
</dbReference>
<dbReference type="HAMAP" id="MF_00391">
    <property type="entry name" value="Ribosomal_bL34"/>
    <property type="match status" value="1"/>
</dbReference>
<dbReference type="InterPro" id="IPR000271">
    <property type="entry name" value="Ribosomal_bL34"/>
</dbReference>
<dbReference type="NCBIfam" id="TIGR01030">
    <property type="entry name" value="rpmH_bact"/>
    <property type="match status" value="1"/>
</dbReference>
<dbReference type="PANTHER" id="PTHR14503:SF4">
    <property type="entry name" value="LARGE RIBOSOMAL SUBUNIT PROTEIN BL34M"/>
    <property type="match status" value="1"/>
</dbReference>
<dbReference type="PANTHER" id="PTHR14503">
    <property type="entry name" value="MITOCHONDRIAL RIBOSOMAL PROTEIN 34 FAMILY MEMBER"/>
    <property type="match status" value="1"/>
</dbReference>
<dbReference type="Pfam" id="PF00468">
    <property type="entry name" value="Ribosomal_L34"/>
    <property type="match status" value="1"/>
</dbReference>
<sequence length="44" mass="5147">MKPTFNPNNRKRKKVHGFRARMATKNGRNILAARRRKGRKALTV</sequence>
<comment type="similarity">
    <text evidence="1">Belongs to the bacterial ribosomal protein bL34 family.</text>
</comment>
<evidence type="ECO:0000255" key="1">
    <source>
        <dbReference type="HAMAP-Rule" id="MF_00391"/>
    </source>
</evidence>
<evidence type="ECO:0000305" key="2"/>
<organism>
    <name type="scientific">Exiguobacterium sp. (strain ATCC BAA-1283 / AT1b)</name>
    <dbReference type="NCBI Taxonomy" id="360911"/>
    <lineage>
        <taxon>Bacteria</taxon>
        <taxon>Bacillati</taxon>
        <taxon>Bacillota</taxon>
        <taxon>Bacilli</taxon>
        <taxon>Bacillales</taxon>
        <taxon>Bacillales Family XII. Incertae Sedis</taxon>
        <taxon>Exiguobacterium</taxon>
    </lineage>
</organism>
<reference key="1">
    <citation type="journal article" date="2011" name="J. Bacteriol.">
        <title>Complete genome sequence of the Thermophilic Bacterium Exiguobacterium sp. AT1b.</title>
        <authorList>
            <person name="Vishnivetskaya T.A."/>
            <person name="Lucas S."/>
            <person name="Copeland A."/>
            <person name="Lapidus A."/>
            <person name="Glavina del Rio T."/>
            <person name="Dalin E."/>
            <person name="Tice H."/>
            <person name="Bruce D.C."/>
            <person name="Goodwin L.A."/>
            <person name="Pitluck S."/>
            <person name="Saunders E."/>
            <person name="Brettin T."/>
            <person name="Detter C."/>
            <person name="Han C."/>
            <person name="Larimer F."/>
            <person name="Land M.L."/>
            <person name="Hauser L.J."/>
            <person name="Kyrpides N.C."/>
            <person name="Ovchinnikova G."/>
            <person name="Kathariou S."/>
            <person name="Ramaley R.F."/>
            <person name="Rodrigues D.F."/>
            <person name="Hendrix C."/>
            <person name="Richardson P."/>
            <person name="Tiedje J.M."/>
        </authorList>
    </citation>
    <scope>NUCLEOTIDE SEQUENCE [LARGE SCALE GENOMIC DNA]</scope>
    <source>
        <strain>ATCC BAA-1283 / AT1b</strain>
    </source>
</reference>
<name>RL34_EXISA</name>
<protein>
    <recommendedName>
        <fullName evidence="1">Large ribosomal subunit protein bL34</fullName>
    </recommendedName>
    <alternativeName>
        <fullName evidence="2">50S ribosomal protein L34</fullName>
    </alternativeName>
</protein>
<gene>
    <name evidence="1" type="primary">rpmH</name>
    <name type="ordered locus">EAT1b_1731</name>
</gene>
<proteinExistence type="inferred from homology"/>
<accession>C4KZZ4</accession>